<evidence type="ECO:0000255" key="1"/>
<evidence type="ECO:0000256" key="2">
    <source>
        <dbReference type="SAM" id="MobiDB-lite"/>
    </source>
</evidence>
<evidence type="ECO:0000269" key="3">
    <source>
    </source>
</evidence>
<evidence type="ECO:0000269" key="4">
    <source>
    </source>
</evidence>
<evidence type="ECO:0000303" key="5">
    <source>
    </source>
</evidence>
<evidence type="ECO:0000305" key="6"/>
<evidence type="ECO:0000305" key="7">
    <source>
    </source>
</evidence>
<evidence type="ECO:0000312" key="8">
    <source>
        <dbReference type="EMBL" id="CCP44239.1"/>
    </source>
</evidence>
<keyword id="KW-0067">ATP-binding</keyword>
<keyword id="KW-0143">Chaperone</keyword>
<keyword id="KW-0547">Nucleotide-binding</keyword>
<keyword id="KW-1185">Reference proteome</keyword>
<keyword id="KW-0843">Virulence</keyword>
<comment type="function">
    <text evidence="3">Displays ATP-enhanced chaperone activity (PubMed:26933057). Required for the proper folding of the peptidoglycan endopeptidase RipA and its secretion through the TAT secretion system (PubMed:26933057). In vitro, prevents thermal aggregation of MalZ protein and protects the functional activity of the restriction enzyme NdeI from thermal inactivation (PubMed:26933057).</text>
</comment>
<comment type="function">
    <text evidence="4">Could be a moonlighting protein that uses a multipronged approach to dampen host-directed immunity for efficient replication, survival and pathogenesis (PubMed:36799069). Can enhance virulence by inhibiting autophagy and apoptosis, and disrupting cellular bioenergetics (PubMed:36799069). Binds and activates host TLR4 on the surface of macrophage cells, leading to the activation of the host NFKB and MAPK signaling cascades and enhanced secretion of proinflammatory cytokines (PubMed:36799069). Inhibits autophagic flux via activation of PI3K-AKT-MTOR-ULK1 signaling cascade and represses apoptosis via inhibiting protooncogene c-FOS and MAPK JNK1/2 (PubMed:36799069). Also induces robust disruption of cellular bioenergetics by metabolic reprogramming to rewire the citric acid cycle intermediates for its benefit (PubMed:36799069).</text>
</comment>
<comment type="subunit">
    <text evidence="3 4">Interacts with RipA (PubMed:26933057). Interacts with host Toll-like receptor 4 (TLR4) (PubMed:36799069).</text>
</comment>
<comment type="domain">
    <text evidence="7">Contains an ATPase chaperone domain along with a nucleoside triphosphate hydrolase domain.</text>
</comment>
<comment type="similarity">
    <text evidence="6">Belongs to the MoxR family.</text>
</comment>
<accession>Q79FN7</accession>
<accession>F2GES0</accession>
<accession>I6Y6N3</accession>
<accession>L0T9I9</accession>
<reference key="1">
    <citation type="journal article" date="1998" name="Nature">
        <title>Deciphering the biology of Mycobacterium tuberculosis from the complete genome sequence.</title>
        <authorList>
            <person name="Cole S.T."/>
            <person name="Brosch R."/>
            <person name="Parkhill J."/>
            <person name="Garnier T."/>
            <person name="Churcher C.M."/>
            <person name="Harris D.E."/>
            <person name="Gordon S.V."/>
            <person name="Eiglmeier K."/>
            <person name="Gas S."/>
            <person name="Barry C.E. III"/>
            <person name="Tekaia F."/>
            <person name="Badcock K."/>
            <person name="Basham D."/>
            <person name="Brown D."/>
            <person name="Chillingworth T."/>
            <person name="Connor R."/>
            <person name="Davies R.M."/>
            <person name="Devlin K."/>
            <person name="Feltwell T."/>
            <person name="Gentles S."/>
            <person name="Hamlin N."/>
            <person name="Holroyd S."/>
            <person name="Hornsby T."/>
            <person name="Jagels K."/>
            <person name="Krogh A."/>
            <person name="McLean J."/>
            <person name="Moule S."/>
            <person name="Murphy L.D."/>
            <person name="Oliver S."/>
            <person name="Osborne J."/>
            <person name="Quail M.A."/>
            <person name="Rajandream M.A."/>
            <person name="Rogers J."/>
            <person name="Rutter S."/>
            <person name="Seeger K."/>
            <person name="Skelton S."/>
            <person name="Squares S."/>
            <person name="Squares R."/>
            <person name="Sulston J.E."/>
            <person name="Taylor K."/>
            <person name="Whitehead S."/>
            <person name="Barrell B.G."/>
        </authorList>
    </citation>
    <scope>NUCLEOTIDE SEQUENCE [LARGE SCALE GENOMIC DNA]</scope>
    <source>
        <strain>ATCC 25618 / H37Rv</strain>
    </source>
</reference>
<reference key="2">
    <citation type="journal article" date="2011" name="Mol. Cell. Proteomics">
        <title>Proteogenomic analysis of Mycobacterium tuberculosis by high resolution mass spectrometry.</title>
        <authorList>
            <person name="Kelkar D.S."/>
            <person name="Kumar D."/>
            <person name="Kumar P."/>
            <person name="Balakrishnan L."/>
            <person name="Muthusamy B."/>
            <person name="Yadav A.K."/>
            <person name="Shrivastava P."/>
            <person name="Marimuthu A."/>
            <person name="Anand S."/>
            <person name="Sundaram H."/>
            <person name="Kingsbury R."/>
            <person name="Harsha H.C."/>
            <person name="Nair B."/>
            <person name="Prasad T.S."/>
            <person name="Chauhan D.S."/>
            <person name="Katoch K."/>
            <person name="Katoch V.M."/>
            <person name="Kumar P."/>
            <person name="Chaerkady R."/>
            <person name="Ramachandran S."/>
            <person name="Dash D."/>
            <person name="Pandey A."/>
        </authorList>
    </citation>
    <scope>IDENTIFICATION BY MASS SPECTROMETRY [LARGE SCALE ANALYSIS]</scope>
</reference>
<reference key="3">
    <citation type="journal article" date="2016" name="MBio">
        <title>Interaction of Mycobacterium tuberculosis virulence factor RipA with chaperone MoxR1 is required for transport through the TAT secretion system.</title>
        <authorList>
            <person name="Bhuwan M."/>
            <person name="Arora N."/>
            <person name="Sharma A."/>
            <person name="Khubaib M."/>
            <person name="Pandey S."/>
            <person name="Chaudhuri T.K."/>
            <person name="Hasnain S.E."/>
            <person name="Ehtesham N.Z."/>
        </authorList>
    </citation>
    <scope>FUNCTION AS A CHAPERONE</scope>
    <scope>INTERACTION WITH RIPA</scope>
    <scope>DOMAIN</scope>
</reference>
<reference key="4">
    <citation type="journal article" date="2023" name="Virulence">
        <title>Mycobacterium tuberculosis protein MoxR1 enhances virulence by inhibiting host cell death pathways and disrupting cellular bioenergetics.</title>
        <authorList>
            <person name="Quadir N."/>
            <person name="Shariq M."/>
            <person name="Sheikh J.A."/>
            <person name="Singh J."/>
            <person name="Sharma N."/>
            <person name="Hasnain S.E."/>
            <person name="Ehtesham N.Z."/>
        </authorList>
    </citation>
    <scope>FUNCTION IN VIRULENCE</scope>
    <scope>INTERACTION WITH TLR4</scope>
</reference>
<sequence>MTSAGGFPAGAGGYQTPGGHSASPAHEAPPGGAEGLAAEVHTLERAIFEVKRIIVGQDQLVERMLVGLLSKGHVLLEGVPGVAKTLAVETFARVVGGTFSRIQFTPDLVPTDIIGTRIYRQGREEFDTELGPVVANFLLADEINRAPAKVQSALLEVMQERHVSIGGRTFPMPSPFLVMATQNPIEHEGVYPLPEAQRDRFLFKINVGYPSPEEEREIIYRMGVTPPQAKQILSTGDLLRLQEIAANNFVHHALVDYVVRVVFATRKPEQLGMNDVKSWVAFGASPRASLGIIAAARSLALVRGRDYVIPQDVIEVIPDVLRHRLVLTYDALADEISPEIVINRVLQTVALPQVNAVPQQGHSVPPVMQAAAAASGR</sequence>
<dbReference type="EMBL" id="AL123456">
    <property type="protein sequence ID" value="CCP44239.1"/>
    <property type="molecule type" value="Genomic_DNA"/>
</dbReference>
<dbReference type="RefSeq" id="WP_003407527.1">
    <property type="nucleotide sequence ID" value="NZ_NVQJ01000004.1"/>
</dbReference>
<dbReference type="RefSeq" id="YP_177816.1">
    <property type="nucleotide sequence ID" value="NC_000962.3"/>
</dbReference>
<dbReference type="SMR" id="Q79FN7"/>
<dbReference type="FunCoup" id="Q79FN7">
    <property type="interactions" value="69"/>
</dbReference>
<dbReference type="STRING" id="83332.Rv1479"/>
<dbReference type="PaxDb" id="83332-Rv1479"/>
<dbReference type="DNASU" id="886537"/>
<dbReference type="GeneID" id="886537"/>
<dbReference type="KEGG" id="mtu:Rv1479"/>
<dbReference type="KEGG" id="mtv:RVBD_1479"/>
<dbReference type="PATRIC" id="fig|83332.111.peg.1646"/>
<dbReference type="TubercuList" id="Rv1479"/>
<dbReference type="eggNOG" id="COG0714">
    <property type="taxonomic scope" value="Bacteria"/>
</dbReference>
<dbReference type="InParanoid" id="Q79FN7"/>
<dbReference type="OrthoDB" id="9808397at2"/>
<dbReference type="PhylomeDB" id="Q79FN7"/>
<dbReference type="Proteomes" id="UP000001584">
    <property type="component" value="Chromosome"/>
</dbReference>
<dbReference type="GO" id="GO:0009274">
    <property type="term" value="C:peptidoglycan-based cell wall"/>
    <property type="evidence" value="ECO:0007005"/>
    <property type="project" value="MTBBASE"/>
</dbReference>
<dbReference type="GO" id="GO:0005886">
    <property type="term" value="C:plasma membrane"/>
    <property type="evidence" value="ECO:0007005"/>
    <property type="project" value="MTBBASE"/>
</dbReference>
<dbReference type="GO" id="GO:0005524">
    <property type="term" value="F:ATP binding"/>
    <property type="evidence" value="ECO:0007669"/>
    <property type="project" value="UniProtKB-KW"/>
</dbReference>
<dbReference type="GO" id="GO:0016887">
    <property type="term" value="F:ATP hydrolysis activity"/>
    <property type="evidence" value="ECO:0007669"/>
    <property type="project" value="InterPro"/>
</dbReference>
<dbReference type="CDD" id="cd00009">
    <property type="entry name" value="AAA"/>
    <property type="match status" value="1"/>
</dbReference>
<dbReference type="FunFam" id="3.40.50.300:FF:000640">
    <property type="entry name" value="MoxR family ATPase"/>
    <property type="match status" value="1"/>
</dbReference>
<dbReference type="FunFam" id="1.10.8.80:FF:000003">
    <property type="entry name" value="Transcriptional regulator moxR1"/>
    <property type="match status" value="1"/>
</dbReference>
<dbReference type="Gene3D" id="1.10.8.80">
    <property type="entry name" value="Magnesium chelatase subunit I, C-Terminal domain"/>
    <property type="match status" value="1"/>
</dbReference>
<dbReference type="Gene3D" id="3.40.50.300">
    <property type="entry name" value="P-loop containing nucleotide triphosphate hydrolases"/>
    <property type="match status" value="1"/>
</dbReference>
<dbReference type="InterPro" id="IPR011703">
    <property type="entry name" value="ATPase_AAA-3"/>
</dbReference>
<dbReference type="InterPro" id="IPR050764">
    <property type="entry name" value="CbbQ/NirQ/NorQ/GpvN"/>
</dbReference>
<dbReference type="InterPro" id="IPR041628">
    <property type="entry name" value="ChlI/MoxR_AAA_lid"/>
</dbReference>
<dbReference type="InterPro" id="IPR027417">
    <property type="entry name" value="P-loop_NTPase"/>
</dbReference>
<dbReference type="PANTHER" id="PTHR42759:SF1">
    <property type="entry name" value="MAGNESIUM-CHELATASE SUBUNIT CHLD"/>
    <property type="match status" value="1"/>
</dbReference>
<dbReference type="PANTHER" id="PTHR42759">
    <property type="entry name" value="MOXR FAMILY PROTEIN"/>
    <property type="match status" value="1"/>
</dbReference>
<dbReference type="Pfam" id="PF07726">
    <property type="entry name" value="AAA_3"/>
    <property type="match status" value="1"/>
</dbReference>
<dbReference type="Pfam" id="PF17863">
    <property type="entry name" value="AAA_lid_2"/>
    <property type="match status" value="1"/>
</dbReference>
<dbReference type="PIRSF" id="PIRSF002849">
    <property type="entry name" value="AAA_ATPase_chaperone_MoxR_prd"/>
    <property type="match status" value="1"/>
</dbReference>
<dbReference type="SUPFAM" id="SSF52540">
    <property type="entry name" value="P-loop containing nucleoside triphosphate hydrolases"/>
    <property type="match status" value="1"/>
</dbReference>
<organism>
    <name type="scientific">Mycobacterium tuberculosis (strain ATCC 25618 / H37Rv)</name>
    <dbReference type="NCBI Taxonomy" id="83332"/>
    <lineage>
        <taxon>Bacteria</taxon>
        <taxon>Bacillati</taxon>
        <taxon>Actinomycetota</taxon>
        <taxon>Actinomycetes</taxon>
        <taxon>Mycobacteriales</taxon>
        <taxon>Mycobacteriaceae</taxon>
        <taxon>Mycobacterium</taxon>
        <taxon>Mycobacterium tuberculosis complex</taxon>
    </lineage>
</organism>
<gene>
    <name evidence="5" type="primary">moxR1</name>
    <name evidence="8" type="synonym">moxR</name>
    <name evidence="8" type="ordered locus">Rv1479</name>
</gene>
<proteinExistence type="evidence at protein level"/>
<name>MOXR1_MYCTU</name>
<protein>
    <recommendedName>
        <fullName evidence="5">Chaperone MoxR1</fullName>
    </recommendedName>
</protein>
<feature type="chain" id="PRO_0000458849" description="Chaperone MoxR1">
    <location>
        <begin position="1"/>
        <end position="377"/>
    </location>
</feature>
<feature type="region of interest" description="Disordered" evidence="2">
    <location>
        <begin position="1"/>
        <end position="33"/>
    </location>
</feature>
<feature type="compositionally biased region" description="Gly residues" evidence="2">
    <location>
        <begin position="7"/>
        <end position="16"/>
    </location>
</feature>
<feature type="compositionally biased region" description="Low complexity" evidence="2">
    <location>
        <begin position="19"/>
        <end position="33"/>
    </location>
</feature>
<feature type="binding site" evidence="1">
    <location>
        <begin position="78"/>
        <end position="85"/>
    </location>
    <ligand>
        <name>ATP</name>
        <dbReference type="ChEBI" id="CHEBI:30616"/>
    </ligand>
</feature>